<protein>
    <recommendedName>
        <fullName evidence="1">ATP synthase subunit a</fullName>
    </recommendedName>
    <alternativeName>
        <fullName evidence="1">ATP synthase F0 sector subunit a</fullName>
    </alternativeName>
    <alternativeName>
        <fullName evidence="1">F-ATPase subunit 6</fullName>
    </alternativeName>
</protein>
<reference key="1">
    <citation type="journal article" date="2008" name="BMC Genomics">
        <title>Genomics of an extreme psychrophile, Psychromonas ingrahamii.</title>
        <authorList>
            <person name="Riley M."/>
            <person name="Staley J.T."/>
            <person name="Danchin A."/>
            <person name="Wang T.Z."/>
            <person name="Brettin T.S."/>
            <person name="Hauser L.J."/>
            <person name="Land M.L."/>
            <person name="Thompson L.S."/>
        </authorList>
    </citation>
    <scope>NUCLEOTIDE SEQUENCE [LARGE SCALE GENOMIC DNA]</scope>
    <source>
        <strain>DSM 17664 / CCUG 51855 / 37</strain>
    </source>
</reference>
<proteinExistence type="inferred from homology"/>
<gene>
    <name evidence="1" type="primary">atpB</name>
    <name type="ordered locus">Ping_3736</name>
</gene>
<keyword id="KW-0066">ATP synthesis</keyword>
<keyword id="KW-0997">Cell inner membrane</keyword>
<keyword id="KW-1003">Cell membrane</keyword>
<keyword id="KW-0138">CF(0)</keyword>
<keyword id="KW-0375">Hydrogen ion transport</keyword>
<keyword id="KW-0406">Ion transport</keyword>
<keyword id="KW-0472">Membrane</keyword>
<keyword id="KW-1185">Reference proteome</keyword>
<keyword id="KW-0812">Transmembrane</keyword>
<keyword id="KW-1133">Transmembrane helix</keyword>
<keyword id="KW-0813">Transport</keyword>
<name>ATP6_PSYIN</name>
<feature type="chain" id="PRO_0000362407" description="ATP synthase subunit a">
    <location>
        <begin position="1"/>
        <end position="267"/>
    </location>
</feature>
<feature type="transmembrane region" description="Helical" evidence="1">
    <location>
        <begin position="38"/>
        <end position="58"/>
    </location>
</feature>
<feature type="transmembrane region" description="Helical" evidence="1">
    <location>
        <begin position="98"/>
        <end position="118"/>
    </location>
</feature>
<feature type="transmembrane region" description="Helical" evidence="1">
    <location>
        <begin position="145"/>
        <end position="165"/>
    </location>
</feature>
<feature type="transmembrane region" description="Helical" evidence="1">
    <location>
        <begin position="208"/>
        <end position="228"/>
    </location>
</feature>
<feature type="transmembrane region" description="Helical" evidence="1">
    <location>
        <begin position="238"/>
        <end position="258"/>
    </location>
</feature>
<organism>
    <name type="scientific">Psychromonas ingrahamii (strain DSM 17664 / CCUG 51855 / 37)</name>
    <dbReference type="NCBI Taxonomy" id="357804"/>
    <lineage>
        <taxon>Bacteria</taxon>
        <taxon>Pseudomonadati</taxon>
        <taxon>Pseudomonadota</taxon>
        <taxon>Gammaproteobacteria</taxon>
        <taxon>Alteromonadales</taxon>
        <taxon>Psychromonadaceae</taxon>
        <taxon>Psychromonas</taxon>
    </lineage>
</organism>
<comment type="function">
    <text evidence="1">Key component of the proton channel; it plays a direct role in the translocation of protons across the membrane.</text>
</comment>
<comment type="subunit">
    <text evidence="1">F-type ATPases have 2 components, CF(1) - the catalytic core - and CF(0) - the membrane proton channel. CF(1) has five subunits: alpha(3), beta(3), gamma(1), delta(1), epsilon(1). CF(0) has three main subunits: a(1), b(2) and c(9-12). The alpha and beta chains form an alternating ring which encloses part of the gamma chain. CF(1) is attached to CF(0) by a central stalk formed by the gamma and epsilon chains, while a peripheral stalk is formed by the delta and b chains.</text>
</comment>
<comment type="subcellular location">
    <subcellularLocation>
        <location evidence="1">Cell inner membrane</location>
        <topology evidence="1">Multi-pass membrane protein</topology>
    </subcellularLocation>
</comment>
<comment type="similarity">
    <text evidence="1">Belongs to the ATPase A chain family.</text>
</comment>
<sequence length="267" mass="29770">MLTSSGYIQHHLTNAQMCTVDGSIAFNYACADAGFWTWHIDSLLFSVGLGVLFLFVFYKVGQKATTGVPGKLQCAVEMLMEFVSNAVKDSFHGRSPVIAPLALTIFVWILLMNTMDLIPVDFIPEAAKQILGVPYLKVVPTTDMNITFGLSLSVFALIVFYSIKIKGITGFVKELTLQPFNHWAFIPVNFILETIALIAKPISLSLRLFGNLYAGELIFILIALMPWWSQAALSVPWAIFHILVIVLQAFIFMMLTIVYLSMAHEDH</sequence>
<accession>A1T0Z5</accession>
<dbReference type="EMBL" id="CP000510">
    <property type="protein sequence ID" value="ABM05410.1"/>
    <property type="molecule type" value="Genomic_DNA"/>
</dbReference>
<dbReference type="SMR" id="A1T0Z5"/>
<dbReference type="STRING" id="357804.Ping_3736"/>
<dbReference type="KEGG" id="pin:Ping_3736"/>
<dbReference type="eggNOG" id="COG0356">
    <property type="taxonomic scope" value="Bacteria"/>
</dbReference>
<dbReference type="HOGENOM" id="CLU_041018_1_0_6"/>
<dbReference type="Proteomes" id="UP000000639">
    <property type="component" value="Chromosome"/>
</dbReference>
<dbReference type="GO" id="GO:0005886">
    <property type="term" value="C:plasma membrane"/>
    <property type="evidence" value="ECO:0007669"/>
    <property type="project" value="UniProtKB-SubCell"/>
</dbReference>
<dbReference type="GO" id="GO:0045259">
    <property type="term" value="C:proton-transporting ATP synthase complex"/>
    <property type="evidence" value="ECO:0007669"/>
    <property type="project" value="UniProtKB-KW"/>
</dbReference>
<dbReference type="GO" id="GO:0046933">
    <property type="term" value="F:proton-transporting ATP synthase activity, rotational mechanism"/>
    <property type="evidence" value="ECO:0007669"/>
    <property type="project" value="UniProtKB-UniRule"/>
</dbReference>
<dbReference type="GO" id="GO:0042777">
    <property type="term" value="P:proton motive force-driven plasma membrane ATP synthesis"/>
    <property type="evidence" value="ECO:0007669"/>
    <property type="project" value="TreeGrafter"/>
</dbReference>
<dbReference type="CDD" id="cd00310">
    <property type="entry name" value="ATP-synt_Fo_a_6"/>
    <property type="match status" value="1"/>
</dbReference>
<dbReference type="FunFam" id="1.20.120.220:FF:000002">
    <property type="entry name" value="ATP synthase subunit a"/>
    <property type="match status" value="1"/>
</dbReference>
<dbReference type="Gene3D" id="1.20.120.220">
    <property type="entry name" value="ATP synthase, F0 complex, subunit A"/>
    <property type="match status" value="1"/>
</dbReference>
<dbReference type="HAMAP" id="MF_01393">
    <property type="entry name" value="ATP_synth_a_bact"/>
    <property type="match status" value="1"/>
</dbReference>
<dbReference type="InterPro" id="IPR045082">
    <property type="entry name" value="ATP_syn_F0_a_bact/chloroplast"/>
</dbReference>
<dbReference type="InterPro" id="IPR000568">
    <property type="entry name" value="ATP_synth_F0_asu"/>
</dbReference>
<dbReference type="InterPro" id="IPR023011">
    <property type="entry name" value="ATP_synth_F0_asu_AS"/>
</dbReference>
<dbReference type="InterPro" id="IPR035908">
    <property type="entry name" value="F0_ATP_A_sf"/>
</dbReference>
<dbReference type="NCBIfam" id="TIGR01131">
    <property type="entry name" value="ATP_synt_6_or_A"/>
    <property type="match status" value="1"/>
</dbReference>
<dbReference type="NCBIfam" id="NF004477">
    <property type="entry name" value="PRK05815.1-1"/>
    <property type="match status" value="1"/>
</dbReference>
<dbReference type="PANTHER" id="PTHR42823">
    <property type="entry name" value="ATP SYNTHASE SUBUNIT A, CHLOROPLASTIC"/>
    <property type="match status" value="1"/>
</dbReference>
<dbReference type="PANTHER" id="PTHR42823:SF3">
    <property type="entry name" value="ATP SYNTHASE SUBUNIT A, CHLOROPLASTIC"/>
    <property type="match status" value="1"/>
</dbReference>
<dbReference type="Pfam" id="PF00119">
    <property type="entry name" value="ATP-synt_A"/>
    <property type="match status" value="1"/>
</dbReference>
<dbReference type="PRINTS" id="PR00123">
    <property type="entry name" value="ATPASEA"/>
</dbReference>
<dbReference type="SUPFAM" id="SSF81336">
    <property type="entry name" value="F1F0 ATP synthase subunit A"/>
    <property type="match status" value="1"/>
</dbReference>
<dbReference type="PROSITE" id="PS00449">
    <property type="entry name" value="ATPASE_A"/>
    <property type="match status" value="1"/>
</dbReference>
<evidence type="ECO:0000255" key="1">
    <source>
        <dbReference type="HAMAP-Rule" id="MF_01393"/>
    </source>
</evidence>